<dbReference type="EC" id="6.3.2.-" evidence="8"/>
<dbReference type="EMBL" id="BN001308">
    <property type="protein sequence ID" value="CBF87869.1"/>
    <property type="molecule type" value="Genomic_DNA"/>
</dbReference>
<dbReference type="RefSeq" id="XP_658846.1">
    <property type="nucleotide sequence ID" value="XM_653754.1"/>
</dbReference>
<dbReference type="SMR" id="Q5BDY8"/>
<dbReference type="STRING" id="227321.Q5BDY8"/>
<dbReference type="EnsemblFungi" id="CBF87869">
    <property type="protein sequence ID" value="CBF87869"/>
    <property type="gene ID" value="ANIA_01242"/>
</dbReference>
<dbReference type="GeneID" id="2877020"/>
<dbReference type="KEGG" id="ani:ANIA_01242"/>
<dbReference type="eggNOG" id="KOG1178">
    <property type="taxonomic scope" value="Eukaryota"/>
</dbReference>
<dbReference type="HOGENOM" id="CLU_000022_60_6_1"/>
<dbReference type="InParanoid" id="Q5BDY8"/>
<dbReference type="OMA" id="YPCSRMQ"/>
<dbReference type="OrthoDB" id="416786at2759"/>
<dbReference type="Proteomes" id="UP000000560">
    <property type="component" value="Chromosome VIII"/>
</dbReference>
<dbReference type="GO" id="GO:0016853">
    <property type="term" value="F:isomerase activity"/>
    <property type="evidence" value="ECO:0007669"/>
    <property type="project" value="UniProtKB-KW"/>
</dbReference>
<dbReference type="GO" id="GO:0016874">
    <property type="term" value="F:ligase activity"/>
    <property type="evidence" value="ECO:0007669"/>
    <property type="project" value="UniProtKB-KW"/>
</dbReference>
<dbReference type="CDD" id="cd05918">
    <property type="entry name" value="A_NRPS_SidN3_like"/>
    <property type="match status" value="3"/>
</dbReference>
<dbReference type="CDD" id="cd19542">
    <property type="entry name" value="CT_NRPS-like"/>
    <property type="match status" value="3"/>
</dbReference>
<dbReference type="CDD" id="cd19534">
    <property type="entry name" value="E_NRPS"/>
    <property type="match status" value="2"/>
</dbReference>
<dbReference type="CDD" id="cd19545">
    <property type="entry name" value="FUM14_C_NRPS-like"/>
    <property type="match status" value="1"/>
</dbReference>
<dbReference type="FunFam" id="1.10.1200.10:FF:000024">
    <property type="entry name" value="Nonribosomal peptide synthase Pes1"/>
    <property type="match status" value="1"/>
</dbReference>
<dbReference type="FunFam" id="1.10.1200.10:FF:000026">
    <property type="entry name" value="Nonribosomal peptide synthase Pes1"/>
    <property type="match status" value="1"/>
</dbReference>
<dbReference type="FunFam" id="3.30.559.10:FF:000016">
    <property type="entry name" value="Nonribosomal peptide synthase Pes1"/>
    <property type="match status" value="2"/>
</dbReference>
<dbReference type="FunFam" id="3.30.559.10:FF:000017">
    <property type="entry name" value="Nonribosomal peptide synthase Pes1"/>
    <property type="match status" value="2"/>
</dbReference>
<dbReference type="FunFam" id="3.30.559.10:FF:000031">
    <property type="entry name" value="Nonribosomal peptide synthase Pes1"/>
    <property type="match status" value="1"/>
</dbReference>
<dbReference type="FunFam" id="3.30.559.30:FF:000002">
    <property type="entry name" value="Nonribosomal peptide synthase Pes1"/>
    <property type="match status" value="2"/>
</dbReference>
<dbReference type="FunFam" id="3.30.559.30:FF:000005">
    <property type="entry name" value="Nonribosomal peptide synthase Pes1"/>
    <property type="match status" value="1"/>
</dbReference>
<dbReference type="FunFam" id="3.30.559.30:FF:000010">
    <property type="entry name" value="Nonribosomal peptide synthase Pes1"/>
    <property type="match status" value="1"/>
</dbReference>
<dbReference type="FunFam" id="3.30.300.30:FF:000015">
    <property type="entry name" value="Nonribosomal peptide synthase SidD"/>
    <property type="match status" value="3"/>
</dbReference>
<dbReference type="FunFam" id="3.30.559.30:FF:000003">
    <property type="entry name" value="Nonribosomal peptide synthase SidD"/>
    <property type="match status" value="1"/>
</dbReference>
<dbReference type="FunFam" id="1.10.1200.10:FF:000005">
    <property type="entry name" value="Nonribosomal peptide synthetase 1"/>
    <property type="match status" value="2"/>
</dbReference>
<dbReference type="FunFam" id="3.40.50.12780:FF:000014">
    <property type="entry name" value="Nonribosomal peptide synthetase 1"/>
    <property type="match status" value="2"/>
</dbReference>
<dbReference type="Gene3D" id="3.30.300.30">
    <property type="match status" value="4"/>
</dbReference>
<dbReference type="Gene3D" id="1.10.1200.10">
    <property type="entry name" value="ACP-like"/>
    <property type="match status" value="5"/>
</dbReference>
<dbReference type="Gene3D" id="3.30.559.10">
    <property type="entry name" value="Chloramphenicol acetyltransferase-like domain"/>
    <property type="match status" value="6"/>
</dbReference>
<dbReference type="Gene3D" id="3.40.50.12780">
    <property type="entry name" value="N-terminal domain of ligase-like"/>
    <property type="match status" value="5"/>
</dbReference>
<dbReference type="Gene3D" id="3.30.559.30">
    <property type="entry name" value="Nonribosomal peptide synthetase, condensation domain"/>
    <property type="match status" value="9"/>
</dbReference>
<dbReference type="InterPro" id="IPR010071">
    <property type="entry name" value="AA_adenyl_dom"/>
</dbReference>
<dbReference type="InterPro" id="IPR036736">
    <property type="entry name" value="ACP-like_sf"/>
</dbReference>
<dbReference type="InterPro" id="IPR045851">
    <property type="entry name" value="AMP-bd_C_sf"/>
</dbReference>
<dbReference type="InterPro" id="IPR020845">
    <property type="entry name" value="AMP-binding_CS"/>
</dbReference>
<dbReference type="InterPro" id="IPR000873">
    <property type="entry name" value="AMP-dep_synth/lig_dom"/>
</dbReference>
<dbReference type="InterPro" id="IPR042099">
    <property type="entry name" value="ANL_N_sf"/>
</dbReference>
<dbReference type="InterPro" id="IPR023213">
    <property type="entry name" value="CAT-like_dom_sf"/>
</dbReference>
<dbReference type="InterPro" id="IPR001242">
    <property type="entry name" value="Condensatn"/>
</dbReference>
<dbReference type="InterPro" id="IPR009081">
    <property type="entry name" value="PP-bd_ACP"/>
</dbReference>
<dbReference type="InterPro" id="IPR006162">
    <property type="entry name" value="Ppantetheine_attach_site"/>
</dbReference>
<dbReference type="NCBIfam" id="TIGR01733">
    <property type="entry name" value="AA-adenyl-dom"/>
    <property type="match status" value="2"/>
</dbReference>
<dbReference type="NCBIfam" id="NF003417">
    <property type="entry name" value="PRK04813.1"/>
    <property type="match status" value="5"/>
</dbReference>
<dbReference type="PANTHER" id="PTHR45527">
    <property type="entry name" value="NONRIBOSOMAL PEPTIDE SYNTHETASE"/>
    <property type="match status" value="1"/>
</dbReference>
<dbReference type="PANTHER" id="PTHR45527:SF12">
    <property type="entry name" value="NONRIBOSOMAL PEPTIDE SYNTHETASE IVOA"/>
    <property type="match status" value="1"/>
</dbReference>
<dbReference type="Pfam" id="PF00501">
    <property type="entry name" value="AMP-binding"/>
    <property type="match status" value="4"/>
</dbReference>
<dbReference type="Pfam" id="PF00668">
    <property type="entry name" value="Condensation"/>
    <property type="match status" value="8"/>
</dbReference>
<dbReference type="Pfam" id="PF00550">
    <property type="entry name" value="PP-binding"/>
    <property type="match status" value="4"/>
</dbReference>
<dbReference type="SUPFAM" id="SSF56801">
    <property type="entry name" value="Acetyl-CoA synthetase-like"/>
    <property type="match status" value="4"/>
</dbReference>
<dbReference type="SUPFAM" id="SSF47336">
    <property type="entry name" value="ACP-like"/>
    <property type="match status" value="5"/>
</dbReference>
<dbReference type="SUPFAM" id="SSF52777">
    <property type="entry name" value="CoA-dependent acyltransferases"/>
    <property type="match status" value="15"/>
</dbReference>
<dbReference type="PROSITE" id="PS00455">
    <property type="entry name" value="AMP_BINDING"/>
    <property type="match status" value="1"/>
</dbReference>
<dbReference type="PROSITE" id="PS50075">
    <property type="entry name" value="CARRIER"/>
    <property type="match status" value="5"/>
</dbReference>
<dbReference type="PROSITE" id="PS00012">
    <property type="entry name" value="PHOSPHOPANTETHEINE"/>
    <property type="match status" value="1"/>
</dbReference>
<protein>
    <recommendedName>
        <fullName evidence="6">Nonribosomal peptide synthetase nlsA</fullName>
        <ecNumber evidence="8">6.3.2.-</ecNumber>
    </recommendedName>
    <alternativeName>
        <fullName evidence="7">Nidulanin A synthase</fullName>
    </alternativeName>
</protein>
<proteinExistence type="inferred from homology"/>
<feature type="chain" id="PRO_0000444198" description="Nonribosomal peptide synthetase nlsA">
    <location>
        <begin position="1"/>
        <end position="6077"/>
    </location>
</feature>
<feature type="domain" description="Carrier 1" evidence="3">
    <location>
        <begin position="751"/>
        <end position="827"/>
    </location>
</feature>
<feature type="domain" description="Carrier 2" evidence="3">
    <location>
        <begin position="3297"/>
        <end position="3373"/>
    </location>
</feature>
<feature type="domain" description="Carrier 3" evidence="3">
    <location>
        <begin position="4361"/>
        <end position="4437"/>
    </location>
</feature>
<feature type="domain" description="Carrier 4" evidence="3">
    <location>
        <begin position="5334"/>
        <end position="5410"/>
    </location>
</feature>
<feature type="domain" description="Carrier 5" evidence="3">
    <location>
        <begin position="5921"/>
        <end position="6004"/>
    </location>
</feature>
<feature type="region of interest" description="Adenylation 1" evidence="2">
    <location>
        <begin position="417"/>
        <end position="618"/>
    </location>
</feature>
<feature type="region of interest" description="Condensation 1" evidence="2">
    <location>
        <begin position="842"/>
        <end position="1267"/>
    </location>
</feature>
<feature type="region of interest" description="Condensation 2" evidence="2">
    <location>
        <begin position="1309"/>
        <end position="1737"/>
    </location>
</feature>
<feature type="region of interest" description="Adenylation 2" evidence="2">
    <location>
        <begin position="1757"/>
        <end position="2149"/>
    </location>
</feature>
<feature type="region of interest" description="Adenylation 3" evidence="2">
    <location>
        <begin position="2755"/>
        <end position="3157"/>
    </location>
</feature>
<feature type="region of interest" description="Condensation 3" evidence="2">
    <location>
        <begin position="3524"/>
        <end position="3779"/>
    </location>
</feature>
<feature type="region of interest" description="Adenylation 4" evidence="2">
    <location>
        <begin position="3816"/>
        <end position="4213"/>
    </location>
</feature>
<feature type="region of interest" description="Condensation 4" evidence="2">
    <location>
        <begin position="4451"/>
        <end position="4869"/>
    </location>
</feature>
<feature type="region of interest" description="Condensation 5" evidence="2">
    <location>
        <begin position="4916"/>
        <end position="5260"/>
    </location>
</feature>
<feature type="region of interest" description="Condensation 6" evidence="2">
    <location>
        <begin position="5476"/>
        <end position="5885"/>
    </location>
</feature>
<feature type="region of interest" description="Disordered" evidence="4">
    <location>
        <begin position="6013"/>
        <end position="6047"/>
    </location>
</feature>
<feature type="compositionally biased region" description="Low complexity" evidence="4">
    <location>
        <begin position="6013"/>
        <end position="6027"/>
    </location>
</feature>
<feature type="compositionally biased region" description="Polar residues" evidence="4">
    <location>
        <begin position="6031"/>
        <end position="6041"/>
    </location>
</feature>
<feature type="modified residue" description="O-(pantetheine 4'-phosphoryl)serine" evidence="3">
    <location>
        <position position="788"/>
    </location>
</feature>
<feature type="modified residue" description="O-(pantetheine 4'-phosphoryl)serine" evidence="3">
    <location>
        <position position="3334"/>
    </location>
</feature>
<feature type="modified residue" description="O-(pantetheine 4'-phosphoryl)serine" evidence="3">
    <location>
        <position position="4398"/>
    </location>
</feature>
<feature type="modified residue" description="O-(pantetheine 4'-phosphoryl)serine" evidence="3">
    <location>
        <position position="5371"/>
    </location>
</feature>
<accession>Q5BDY8</accession>
<accession>C8VSP8</accession>
<keyword id="KW-0413">Isomerase</keyword>
<keyword id="KW-0436">Ligase</keyword>
<keyword id="KW-0511">Multifunctional enzyme</keyword>
<keyword id="KW-0596">Phosphopantetheine</keyword>
<keyword id="KW-0597">Phosphoprotein</keyword>
<keyword id="KW-1185">Reference proteome</keyword>
<keyword id="KW-0677">Repeat</keyword>
<gene>
    <name evidence="6" type="primary">nlsA</name>
    <name type="ORF">ANIA_01242</name>
</gene>
<comment type="function">
    <text evidence="5">Nonribosomal peptide synthetase involved in the synthesis of nidulanin A and derived compounds (PubMed:23248299). Nidulanin A is a tetracyclopeptide with the sequence L-Phe-L-Kyn-L-Val-D-Val and an isoprene unit N-linked to the amino group of L-kynurenine (PubMed:23248299). The NRPS nlsA is responsible of the synthesis of the cyclopeptide and the prenyltransferase nptA adds the isoprene unit on the L-kynurenine residue of nidulanin A (PubMed:23248299). Further modifications lead to additional oxygenated related compounds (PubMed:23248299).</text>
</comment>
<comment type="pathway">
    <text evidence="5">Secondary metabolite biosynthesis.</text>
</comment>
<comment type="domain">
    <text evidence="1">NRP synthetases are composed of discrete domains (adenylation (A), thiolation (T) or peptidyl carrier protein (PCP) and condensation (C) domains) which when grouped together are referred to as a single module (By similarity). Each module is responsible for the recognition (via the A domain) and incorporation of a single amino acid into the growing peptide product (By similarity). Thus, an NRP synthetase is generally composed of one or more modules and can terminate in a thioesterase domain (TE) that releases the newly synthesized peptide from the enzyme (By similarity). Occasionally, methyltransferase domains (responsible for amino acid methylation) are present within the NRP synthetase (By similarity).</text>
</comment>
<comment type="disruption phenotype">
    <text evidence="5">Impairs the biosynthesis of nidulanin A and related compounds (PubMed:23248299).</text>
</comment>
<comment type="similarity">
    <text evidence="7">Belongs to the NRP synthetase family.</text>
</comment>
<sequence length="6077" mass="677235">MAQQAQCLLPSFGTISDGPKRPVSITTKTTPSQSAKLLSAYKNDSLDPLLKTAWGLLLYRYTGLQDVCFGYKHDDAGALVSQTSDAGRLLTFRLTINEHDTIKTILEKSGGGYGCQTDIGVSGSSNANNDNYSSFNTVVMVRVCGDSTKEETFVRPVFQSILPEECRARLHVKVLQEDICIFLEWWNTDISTAQMESVARYFEHILNQVLYSDDTVVANADCFLEQDWARICKFNSVIPETYDRCIHDVISEQVRLHPQREAVCAWDGSFTYGELDVLASELSYRLKGYGVRPETFVALCFDKSKWNIVAMLGVLKAGGAFVPLDPTHPTPRLRSLVDSVNVNIMLCSRNRAEHLSKVVNNLIPLDEQSFGKISFPPRGYLRQEVKSNNAAYLIFTSGSTGKPKGTLLEHRAFVSCVFAYAPLIHGGCVCVPSEEERLNDIVQAINRMNVNFICLTPSFARFVNPSSIPQVNTALLVGEAMSRTDLEAWSHIKLLNGYGPTEAAVCAAINSTMDINSDCRDIGLATGTHFWVVKPNNHDQLVPVGCPGELLLEGPTLARCYINNPEKTDEVFIYNPTWARHDPKRGDRRFYKTGDLVRYNSDLGSLTFLGRKDSQIKLHGQRIELGEIEHNISTLPLVKHGMAFLCESGPAKGRLMAVVSLNGELSSNTVPFKLLPPAERTYAVTELRQQLSKRLPTYMIPAVWLCVEALPLLPSGKLNRREIISWATNKTDDFQGGASESSGVETPKAAHSEVTVEDRLKSIWSRVLAIPRDRISLDESFLALGGDSIAAITCMGYCKKQGMGVTVQDVLQSKSIRDLVTRVQEIKHLVKYQEETEEPFGLSPIQKLHFMIRKEGQGYFNQSVRTRLSRRLSADDLRHAIQVIIERHSMLRVRLIKDTLVGNLRQRITRDIDSSYRLRVHNINHQAQMESAISVSQSCINAFQGPIMAVDIFYTEDDCFLSMVAHHLAIDIVSWRIILEDLEDILLRSEDKTIYTSSLPFSTWCHLQDERTQTFGSYLEDLPIPDAAYWGVENRVATYGDAICETFELGLDDSKSILMECHKSLATEPVDILLASLLHAFGQTFRDRSLPAIYNEGHGREAWDSSIDISRTVGWFTTVFPIFIREQIPDDPVETVVLVKDIRRSVSDNGRQRFASLMSASTKDEKREFLCPMEISFNYVGQHRDLQRQDGLFQLMNQMAGETGQGGGASDFGKETPRFGLFEISALAVNGRLRFIFSFSKYMRHQKRIRAWIASCGDVLRSLGKRLQTHAKRPTLSDFPMLSLTYPDIESMLAKTLPSLGVSSPELIEDIYPCSRMQQGILLARSRDSSLYAVHDTYEVRGFNGKPDVARLAEAWRMVVSRHAMLRTLFVENLTSRDLFSQLVLRNCEPSILYLSCPTDDDVVSTFNSQRPEIYNEYQPHHRLTFCETASGRVFFRLELSHAAMDGVSISVILRDLQLAYDGKLDQNKPLFKNYIQYLRNTPQDASIVYWKNYLADVKPCLFPTLTDGKIIAQKQLKVLRPKFNLFNDLQTACEERRLTLSSAFTAAWGLTLSLFCGSNDVCFSYMTSLRDALVDDIESVVGPVINLLACRVKISEGDTLRDIMQKVQNDCMEQLAYNTLSLIDIVHELRLSEQALINTGISYQRVTKMQMHHTTGINLSRVCAIQDPAEYPLFVNVVASDKAAEIEVNYWTDTLSDEQAESVSSTFFKCLENIVRHLKEQVGQLEVLSDWNKQRIRKWNKQLPEEVDMLVQDIIQEKMASQPDKPAIIAWDGTLTYAELEYLSSCFAAYLQQLGVRRGTLMPIYVGKSVWQIVAILAVFKTGAICVPRDEAQLGDSVDKWLVDHGAHIVVTLPSLAGSLERQFPVVVPINKSLFEFLPSSSQENLPQVYPHDDSFIAFDSSDPHESSAVLDQRAIIARAASFASTINSNSGTKTFQYAPCTSDMFLQEVMGTFMSGGCLCIPRSDSLSQLSRSINETSANLICLTPLVASFIRPSDVPSIQVLVLFGEQSARNVRNIWSEKVQLYTFYGRTECSSTCIQVSGLDDLDTQSSIGTSVGCCSWVVDPQDFTRLVPVGCIGELVIEGPSVSRGYFCHEKQKKERFTEQDRGLMEPAKRPYTLFPGSRRKMFRTGYLVRYNADGTLVYLGEKVDSMDQTLQMIAFKIEQLLDVQGSAGYRCVAEILDLRIEEYPEPCIAVFILSTEKQQSNTIKQSTVIARKTNNSHMLMAKLHASLAASLPASQVPSLYFPVFGLPMTSLGKVNRPLLRKAVKSLSADSLTEYDLKKFGEFWRHQLEKPSLSGQHLLQPFPIQESPALKMVDKGELLVNAKESSNSAEQFLPQATMIPRRVQVNNSTSISGLLDQTASCLVKARPYEKTPLSSIRSLNADTSQASDFDSALSISSMTSQQQSQYLRSLENAERLHSRFSACPIVVFCALEETGVSLEIRYDDRAVYRSQADRLLALFGECLNIFKSTTGLEEKVADLSKRGGNLQIFNDTIDYWKVQLTDIESCLFPDLSPKKGESRLGTETLRLSNASKMQSACKALSINPNILLQTVWALVLRCYTGLEDVCFGYHVSTKKDSVNILPCRFNLNDDLRLQDVMQKRKEDMESASKYQMPLFEILRAIGSENSPIFNTAFRYRKSSSNAAVFNNAVLDPVNEGLNEYLISVNASVSGSSAEISFDYQSTSLSETDIGHIIDCFECILNSILTLLGPSRVIRDVEFFGRQSCQKVSAWNASLPERPKRCAHTIIQDRVIAQPSAPAICSWDENFTYSELDSLTTKLAYHLMDWGVGPEVFVGLCFEKSAWAVIAQVAVLKAGGAFASLDPAHPESRLRGLVDDIAAPIVLCSTRYLDKSSRICMAALAVSHYTLEQIPDSPATRSLPTLSVENAAYAIFTSGTTGKPKITVLEHAALDVASSCFAKTLGIDSNTRALQFSSYTFDVSILETIITLMTGGCVCTPSDDERMNDLAGAIKRMEANSISCTPSVISTLDPSSVPTLKTIFTGGEKLTEAQIMRWADRRFYNAYGPSEATIIATASLKVNRDGIRLDDDCNSIGTAVCGRAWIVDPYNHHRLLPVGAVGELVLEGYNIARGYLNNDKKTKEVFITLPRWLRDSGLRDVPKPTGRMYRTGDLVRYKSDKNISFISRMDTQVKLNGQRIELEEIEQQCTFISPANTQVAVDIVVPETKTVAKALAAFITIAGHEAQSATPGLGVSSSLLLPLSDSIQRTIGQLHNSLGQVLPQVMIPRLYFPVRYLPLGTTGKLDRKGLRAMVQALPKEQLISYMISNVGSGRAVERAAESTLRDLWAKALEIEPGSISAEDSFFALGGDSFAAMKLVGAARSQNISLSFATIYEHPVLVDMAKCCDDTEKPAERQRADLRPFTLVPGSIPLHDIMEEVSEQCSVTKDSIADIYPCTAVQEGLITLSIKSPGSYVARIPYRLAASIDLQRFKAAWQQVTDEFDILRTRIVHIENTGFLQVVLKKERISWTLETSLDNVTDDTAEGSGALLAKYAIVQLGTDSRYRQCLYKLFIHHLLQRDMQQSDEFWKSYLDGLSCEPFPPKKNKDLSCSGAGSIHRASVDISRKVGTTDTTVPELVRSAWAIVLSVHTGSGDVCFGETLMGRNIDMPGITDVVGPVLTTVPMRIRVDNKLPINQYLRDVRQIITTMIPHQHSGLQRIQKLSGDAALACNFQNLLVIQSDDSQLNDDIWSPVEQDTRGDFFTHPLVVQCQISGPRLLILANYDELVLDDWQTERLIGQFSFVLEQLLSVPRDSLMTVGDIDITGPLDKRDIASWNQRQVTCVNKCVHEIIRENAIMHPQATAICSWDGEITYEEMFQLASSFAAYLVICGVGPETLVPVCLGKSLWTMVTVLSVLLAGGAFVPLDPSHPTSRHKEILEEIEADMILCSPQLRSRYLGSVSTIIPVSEDTIKAYSTVTTSEKANASPTPENMAYAIFTSGSTGRPKGIIIEHRAVCSSVIGFAPVVGLNKESRVFQFASLTFDAAILEVLGTLMLGGCICVPSDDERLNDIPGAMQRMNVSWSFLTPSVACILEPSTVPSLQILTCGGEALSSEVVKKWTGHVKFYGGYGPTETVVFAVVARDFVDHDFTCIGYGVPSTLTWVVQPDDHDRLAPLGAVGELVLEGPALAREYLKNPSKTTDVFINEPAWIKSFPSSLPSPRRIYKTGDLVRYNPDGSIEYLGRKDHQVKLHGQRMELGEIEHRLLASENIRNAVVILPQKGPLRQKLVAVLSLKSLTVESSTIMTGSCELASQKDMLETGYRQIRTSQKSIEEQLPVYMVPQAWAVVKSIPMLVSGKLDRKRICTWLEQIDKSAYDRIMQDYDNVDQVIVEEENKGEREGDATPAIIRDIFAQVLNLPLNKVDPSRSFIYLGGDSISGMAVVSKARKRGLNLPLNRILQAKSIEELAVSCGTKPLPTKNVKESGSLFPLSPIQELFFRSASVLPKALGRFNQSITVRLARRTEPNVLEDAVRAVVQKHAMFRARFSKSSDGTWRQRITDEVDSSYKFCTHPVKNAGNMLSIIADTQSSLDIQRGPVIAADLFDKNGEQILFLVASHICVDVVSWRIVLQELEDFVDTGSIPSDVPLSFKSWCNVQFEESKRLNKSIEIPCQQADLNYWGMSRAPNNYGHVKMDSFALDKQATAFISGHFHEILGTETMEVLLAAVMYSFNRVFPDRDAPTIYNEGHGREPWNYSDPSGTIGWFTTLNPLHVEASSDLLELLKQVKDTRRRISEHSRAFFAHNVLHSDSTDRTHMFSIPLEILFNYLGQLQQLERGGSTFQHYGDVFSAETMDSASDMGPETPRFSLFEITALILKEQLHISFTYNRNMRHQARIQAWMAECKRVLEVELPKFRNVAPQPTLSDYPLLPITYHGLEELTASVLPRLGLESWRQVEDIYPCSPVQEGILFSQLRDPHEYIFNAIFELRQSGNKGSFDLARLKKAWSTVVVRHPVLRTVFIDSCCEEGSFDQVVLKEASDATVLIECDDLDALNKLEAVSLRSNKSLNLYHQLVLCKTSTGRVLMKLEMNHVIIDGGSTSILLRELALAYSNQHPPGPGPLFSEYIKYLREQPTAEALEYWKRRLSDMPPCHLPINASENGARQLGTHLVAFNRFAALQSFCEANSITFANLILAVWAIVLRSHTKSDDVCFGYPSTGRDLPVPGIQDAVGIFINTLCCRVRFDTNQTLKGTVKSVQEDHIASLAYQRSSLAEIQHALGRKGEPLFNTCISIQNRSEDKTEIAGISYEFQKAHDPCEMLGKGKPVTSWVKSHGAESPSDFPDIRNDVEESLQDLVVMMEKTPASSTQTLNTDYRAPNDSEKQLWRLWSITLGLPPHPVKYHDSFFRLGGDSITAMRLVRAARDEGLKLSVADVLKNPVFENMMALINDRKKSIPTTVTEKRADSIEKRVEDKPILTKCESSQDISILRPMSLEFDDTSLRAAISPKVGVFKGGIVDVLPVTDFQALSLTATMFESRWMLNYFYLDGKGSLDIRRLRESFLRVVDAFDILRTVFVCFHGQFYQVVLRKIKPDIFVHETEKGLDEYTNSLQQRDREQSPGQGQQCVQFYVVRKTNSDEHRILVRMSHAQFDGVCLSKIMTAIKMAYEGSPVSPSSFLNYMRLLPGNITPEHYQHWGNLLKGSKMTQIVQRDRPNTFQHIGGFTQQSKVIEIPSTATENVTIATVMQSAWAVTLAKICAQDDVVFGLTVNGRNAVPGAENTIGPCLNFIPIRVTFKDCWTGLDLFRFLQDQQVANMTYESLGFREIVRRCTDWPESTFFTTSVLHQNVDYEGHMQLDNNTYKMGGVGVIDNLTDLTLFSKPVAGQPAQINVALGYSTKGPIHPSFVSTVLDMVCDTAQSLVANPNVALPSPSTIRSLPPQLVEDIPTTGSTDSLLSSLNNHSLSEILVHSDLITRIWQQVLPPKLNTGKPPSSYQLDSSFFGLGGDIVNVAQVVWILEQETGLHIRLEDLLAHSTFLGHMAVLALNMTKRDSAGVDSDAAPAPAYAPVDARASRNVSTSRQQQEGLPLPAANAKSEWSALDRARVLAKKITRLGGLGTRV</sequence>
<name>NLSA_EMENI</name>
<reference key="1">
    <citation type="journal article" date="2005" name="Nature">
        <title>Sequencing of Aspergillus nidulans and comparative analysis with A. fumigatus and A. oryzae.</title>
        <authorList>
            <person name="Galagan J.E."/>
            <person name="Calvo S.E."/>
            <person name="Cuomo C."/>
            <person name="Ma L.-J."/>
            <person name="Wortman J.R."/>
            <person name="Batzoglou S."/>
            <person name="Lee S.-I."/>
            <person name="Bastuerkmen M."/>
            <person name="Spevak C.C."/>
            <person name="Clutterbuck J."/>
            <person name="Kapitonov V."/>
            <person name="Jurka J."/>
            <person name="Scazzocchio C."/>
            <person name="Farman M.L."/>
            <person name="Butler J."/>
            <person name="Purcell S."/>
            <person name="Harris S."/>
            <person name="Braus G.H."/>
            <person name="Draht O."/>
            <person name="Busch S."/>
            <person name="D'Enfert C."/>
            <person name="Bouchier C."/>
            <person name="Goldman G.H."/>
            <person name="Bell-Pedersen D."/>
            <person name="Griffiths-Jones S."/>
            <person name="Doonan J.H."/>
            <person name="Yu J."/>
            <person name="Vienken K."/>
            <person name="Pain A."/>
            <person name="Freitag M."/>
            <person name="Selker E.U."/>
            <person name="Archer D.B."/>
            <person name="Penalva M.A."/>
            <person name="Oakley B.R."/>
            <person name="Momany M."/>
            <person name="Tanaka T."/>
            <person name="Kumagai T."/>
            <person name="Asai K."/>
            <person name="Machida M."/>
            <person name="Nierman W.C."/>
            <person name="Denning D.W."/>
            <person name="Caddick M.X."/>
            <person name="Hynes M."/>
            <person name="Paoletti M."/>
            <person name="Fischer R."/>
            <person name="Miller B.L."/>
            <person name="Dyer P.S."/>
            <person name="Sachs M.S."/>
            <person name="Osmani S.A."/>
            <person name="Birren B.W."/>
        </authorList>
    </citation>
    <scope>NUCLEOTIDE SEQUENCE [LARGE SCALE GENOMIC DNA]</scope>
    <source>
        <strain>FGSC A4 / ATCC 38163 / CBS 112.46 / NRRL 194 / M139</strain>
    </source>
</reference>
<reference key="2">
    <citation type="journal article" date="2009" name="Fungal Genet. Biol.">
        <title>The 2008 update of the Aspergillus nidulans genome annotation: a community effort.</title>
        <authorList>
            <person name="Wortman J.R."/>
            <person name="Gilsenan J.M."/>
            <person name="Joardar V."/>
            <person name="Deegan J."/>
            <person name="Clutterbuck J."/>
            <person name="Andersen M.R."/>
            <person name="Archer D."/>
            <person name="Bencina M."/>
            <person name="Braus G."/>
            <person name="Coutinho P."/>
            <person name="von Dohren H."/>
            <person name="Doonan J."/>
            <person name="Driessen A.J."/>
            <person name="Durek P."/>
            <person name="Espeso E."/>
            <person name="Fekete E."/>
            <person name="Flipphi M."/>
            <person name="Estrada C.G."/>
            <person name="Geysens S."/>
            <person name="Goldman G."/>
            <person name="de Groot P.W."/>
            <person name="Hansen K."/>
            <person name="Harris S.D."/>
            <person name="Heinekamp T."/>
            <person name="Helmstaedt K."/>
            <person name="Henrissat B."/>
            <person name="Hofmann G."/>
            <person name="Homan T."/>
            <person name="Horio T."/>
            <person name="Horiuchi H."/>
            <person name="James S."/>
            <person name="Jones M."/>
            <person name="Karaffa L."/>
            <person name="Karanyi Z."/>
            <person name="Kato M."/>
            <person name="Keller N."/>
            <person name="Kelly D.E."/>
            <person name="Kiel J.A."/>
            <person name="Kim J.M."/>
            <person name="van der Klei I.J."/>
            <person name="Klis F.M."/>
            <person name="Kovalchuk A."/>
            <person name="Krasevec N."/>
            <person name="Kubicek C.P."/>
            <person name="Liu B."/>
            <person name="Maccabe A."/>
            <person name="Meyer V."/>
            <person name="Mirabito P."/>
            <person name="Miskei M."/>
            <person name="Mos M."/>
            <person name="Mullins J."/>
            <person name="Nelson D.R."/>
            <person name="Nielsen J."/>
            <person name="Oakley B.R."/>
            <person name="Osmani S.A."/>
            <person name="Pakula T."/>
            <person name="Paszewski A."/>
            <person name="Paulsen I."/>
            <person name="Pilsyk S."/>
            <person name="Pocsi I."/>
            <person name="Punt P.J."/>
            <person name="Ram A.F."/>
            <person name="Ren Q."/>
            <person name="Robellet X."/>
            <person name="Robson G."/>
            <person name="Seiboth B."/>
            <person name="van Solingen P."/>
            <person name="Specht T."/>
            <person name="Sun J."/>
            <person name="Taheri-Talesh N."/>
            <person name="Takeshita N."/>
            <person name="Ussery D."/>
            <person name="vanKuyk P.A."/>
            <person name="Visser H."/>
            <person name="van de Vondervoort P.J."/>
            <person name="de Vries R.P."/>
            <person name="Walton J."/>
            <person name="Xiang X."/>
            <person name="Xiong Y."/>
            <person name="Zeng A.P."/>
            <person name="Brandt B.W."/>
            <person name="Cornell M.J."/>
            <person name="van den Hondel C.A."/>
            <person name="Visser J."/>
            <person name="Oliver S.G."/>
            <person name="Turner G."/>
        </authorList>
    </citation>
    <scope>GENOME REANNOTATION</scope>
    <source>
        <strain>FGSC A4 / ATCC 38163 / CBS 112.46 / NRRL 194 / M139</strain>
    </source>
</reference>
<reference key="3">
    <citation type="journal article" date="2013" name="Proc. Natl. Acad. Sci. U.S.A.">
        <title>Accurate prediction of secondary metabolite gene clusters in filamentous fungi.</title>
        <authorList>
            <person name="Andersen M.R."/>
            <person name="Nielsen J.B."/>
            <person name="Klitgaard A."/>
            <person name="Petersen L.M."/>
            <person name="Zachariasen M."/>
            <person name="Hansen T.J."/>
            <person name="Blicher L.H."/>
            <person name="Gotfredsen C.H."/>
            <person name="Larsen T.O."/>
            <person name="Nielsen K.F."/>
            <person name="Mortensen U.H."/>
        </authorList>
    </citation>
    <scope>FUNCTION</scope>
    <scope>DISRUPTION PHENOTYPE</scope>
    <scope>PATHWAY</scope>
</reference>
<evidence type="ECO:0000250" key="1">
    <source>
        <dbReference type="UniProtKB" id="A0A144KPJ6"/>
    </source>
</evidence>
<evidence type="ECO:0000255" key="2"/>
<evidence type="ECO:0000255" key="3">
    <source>
        <dbReference type="PROSITE-ProRule" id="PRU00258"/>
    </source>
</evidence>
<evidence type="ECO:0000256" key="4">
    <source>
        <dbReference type="SAM" id="MobiDB-lite"/>
    </source>
</evidence>
<evidence type="ECO:0000269" key="5">
    <source>
    </source>
</evidence>
<evidence type="ECO:0000303" key="6">
    <source>
    </source>
</evidence>
<evidence type="ECO:0000305" key="7"/>
<evidence type="ECO:0000305" key="8">
    <source>
    </source>
</evidence>
<organism>
    <name type="scientific">Emericella nidulans (strain FGSC A4 / ATCC 38163 / CBS 112.46 / NRRL 194 / M139)</name>
    <name type="common">Aspergillus nidulans</name>
    <dbReference type="NCBI Taxonomy" id="227321"/>
    <lineage>
        <taxon>Eukaryota</taxon>
        <taxon>Fungi</taxon>
        <taxon>Dikarya</taxon>
        <taxon>Ascomycota</taxon>
        <taxon>Pezizomycotina</taxon>
        <taxon>Eurotiomycetes</taxon>
        <taxon>Eurotiomycetidae</taxon>
        <taxon>Eurotiales</taxon>
        <taxon>Aspergillaceae</taxon>
        <taxon>Aspergillus</taxon>
        <taxon>Aspergillus subgen. Nidulantes</taxon>
    </lineage>
</organism>